<feature type="chain" id="PRO_0000252946" description="Fluoride-specific ion channel FluC 1">
    <location>
        <begin position="1"/>
        <end position="117"/>
    </location>
</feature>
<feature type="transmembrane region" description="Helical" evidence="1">
    <location>
        <begin position="1"/>
        <end position="21"/>
    </location>
</feature>
<feature type="transmembrane region" description="Helical" evidence="1">
    <location>
        <begin position="35"/>
        <end position="55"/>
    </location>
</feature>
<feature type="transmembrane region" description="Helical" evidence="1">
    <location>
        <begin position="60"/>
        <end position="80"/>
    </location>
</feature>
<feature type="transmembrane region" description="Helical" evidence="1">
    <location>
        <begin position="97"/>
        <end position="117"/>
    </location>
</feature>
<feature type="binding site" evidence="1">
    <location>
        <position position="71"/>
    </location>
    <ligand>
        <name>Na(+)</name>
        <dbReference type="ChEBI" id="CHEBI:29101"/>
        <note>structural</note>
    </ligand>
</feature>
<feature type="binding site" evidence="1">
    <location>
        <position position="74"/>
    </location>
    <ligand>
        <name>Na(+)</name>
        <dbReference type="ChEBI" id="CHEBI:29101"/>
        <note>structural</note>
    </ligand>
</feature>
<protein>
    <recommendedName>
        <fullName evidence="1">Fluoride-specific ion channel FluC 1</fullName>
    </recommendedName>
</protein>
<reference key="1">
    <citation type="journal article" date="2005" name="J. Bacteriol.">
        <title>Whole-genome sequencing of Staphylococcus haemolyticus uncovers the extreme plasticity of its genome and the evolution of human-colonizing staphylococcal species.</title>
        <authorList>
            <person name="Takeuchi F."/>
            <person name="Watanabe S."/>
            <person name="Baba T."/>
            <person name="Yuzawa H."/>
            <person name="Ito T."/>
            <person name="Morimoto Y."/>
            <person name="Kuroda M."/>
            <person name="Cui L."/>
            <person name="Takahashi M."/>
            <person name="Ankai A."/>
            <person name="Baba S."/>
            <person name="Fukui S."/>
            <person name="Lee J.C."/>
            <person name="Hiramatsu K."/>
        </authorList>
    </citation>
    <scope>NUCLEOTIDE SEQUENCE [LARGE SCALE GENOMIC DNA]</scope>
    <source>
        <strain>JCSC1435</strain>
    </source>
</reference>
<name>FLUC1_STAHJ</name>
<comment type="function">
    <text evidence="1">Fluoride-specific ion channel. Important for reducing fluoride concentration in the cell, thus reducing its toxicity.</text>
</comment>
<comment type="catalytic activity">
    <reaction evidence="1">
        <text>fluoride(in) = fluoride(out)</text>
        <dbReference type="Rhea" id="RHEA:76159"/>
        <dbReference type="ChEBI" id="CHEBI:17051"/>
    </reaction>
    <physiologicalReaction direction="left-to-right" evidence="1">
        <dbReference type="Rhea" id="RHEA:76160"/>
    </physiologicalReaction>
</comment>
<comment type="activity regulation">
    <text evidence="1">Na(+) is not transported, but it plays an essential structural role and its presence is essential for fluoride channel function.</text>
</comment>
<comment type="subcellular location">
    <subcellularLocation>
        <location evidence="1">Cell membrane</location>
        <topology evidence="1">Multi-pass membrane protein</topology>
    </subcellularLocation>
</comment>
<comment type="similarity">
    <text evidence="1">Belongs to the fluoride channel Fluc/FEX (TC 1.A.43) family.</text>
</comment>
<organism>
    <name type="scientific">Staphylococcus haemolyticus (strain JCSC1435)</name>
    <dbReference type="NCBI Taxonomy" id="279808"/>
    <lineage>
        <taxon>Bacteria</taxon>
        <taxon>Bacillati</taxon>
        <taxon>Bacillota</taxon>
        <taxon>Bacilli</taxon>
        <taxon>Bacillales</taxon>
        <taxon>Staphylococcaceae</taxon>
        <taxon>Staphylococcus</taxon>
    </lineage>
</organism>
<proteinExistence type="inferred from homology"/>
<dbReference type="EMBL" id="AP006716">
    <property type="protein sequence ID" value="BAE04451.1"/>
    <property type="molecule type" value="Genomic_DNA"/>
</dbReference>
<dbReference type="RefSeq" id="WP_011275443.1">
    <property type="nucleotide sequence ID" value="NC_007168.1"/>
</dbReference>
<dbReference type="SMR" id="Q4L7C4"/>
<dbReference type="KEGG" id="sha:SH1142"/>
<dbReference type="eggNOG" id="COG0239">
    <property type="taxonomic scope" value="Bacteria"/>
</dbReference>
<dbReference type="HOGENOM" id="CLU_114342_2_3_9"/>
<dbReference type="OrthoDB" id="9815830at2"/>
<dbReference type="Proteomes" id="UP000000543">
    <property type="component" value="Chromosome"/>
</dbReference>
<dbReference type="GO" id="GO:0005886">
    <property type="term" value="C:plasma membrane"/>
    <property type="evidence" value="ECO:0007669"/>
    <property type="project" value="UniProtKB-SubCell"/>
</dbReference>
<dbReference type="GO" id="GO:0062054">
    <property type="term" value="F:fluoride channel activity"/>
    <property type="evidence" value="ECO:0007669"/>
    <property type="project" value="UniProtKB-UniRule"/>
</dbReference>
<dbReference type="GO" id="GO:0046872">
    <property type="term" value="F:metal ion binding"/>
    <property type="evidence" value="ECO:0007669"/>
    <property type="project" value="UniProtKB-KW"/>
</dbReference>
<dbReference type="GO" id="GO:0140114">
    <property type="term" value="P:cellular detoxification of fluoride"/>
    <property type="evidence" value="ECO:0007669"/>
    <property type="project" value="UniProtKB-UniRule"/>
</dbReference>
<dbReference type="HAMAP" id="MF_00454">
    <property type="entry name" value="FluC"/>
    <property type="match status" value="1"/>
</dbReference>
<dbReference type="InterPro" id="IPR003691">
    <property type="entry name" value="FluC"/>
</dbReference>
<dbReference type="PANTHER" id="PTHR28259">
    <property type="entry name" value="FLUORIDE EXPORT PROTEIN 1-RELATED"/>
    <property type="match status" value="1"/>
</dbReference>
<dbReference type="PANTHER" id="PTHR28259:SF16">
    <property type="entry name" value="FLUORIDE-SPECIFIC ION CHANNEL FLUC 2"/>
    <property type="match status" value="1"/>
</dbReference>
<dbReference type="Pfam" id="PF02537">
    <property type="entry name" value="CRCB"/>
    <property type="match status" value="1"/>
</dbReference>
<sequence>MIHILFIMVGGGIGAVIRAWLTDVFKSKITSPIPIATLIVNLVGSFLIGFVYGIAQDYQLFSLFFITGVLGGLTTFSTLSYEIVQFISPSFKPVQFFSYSILQFVIGFISCFIGYSI</sequence>
<gene>
    <name evidence="1" type="primary">fluC1</name>
    <name evidence="1" type="synonym">crcB1</name>
    <name type="ordered locus">SH1142</name>
</gene>
<evidence type="ECO:0000255" key="1">
    <source>
        <dbReference type="HAMAP-Rule" id="MF_00454"/>
    </source>
</evidence>
<accession>Q4L7C4</accession>
<keyword id="KW-1003">Cell membrane</keyword>
<keyword id="KW-0407">Ion channel</keyword>
<keyword id="KW-0406">Ion transport</keyword>
<keyword id="KW-0472">Membrane</keyword>
<keyword id="KW-0479">Metal-binding</keyword>
<keyword id="KW-0915">Sodium</keyword>
<keyword id="KW-0812">Transmembrane</keyword>
<keyword id="KW-1133">Transmembrane helix</keyword>
<keyword id="KW-0813">Transport</keyword>